<feature type="chain" id="PRO_0000330762" description="Protein UXT homolog">
    <location>
        <begin position="1"/>
        <end position="159"/>
    </location>
</feature>
<comment type="similarity">
    <text evidence="1">Belongs to the UXT family.</text>
</comment>
<gene>
    <name type="ORF">v1g140887</name>
</gene>
<organism>
    <name type="scientific">Nematostella vectensis</name>
    <name type="common">Starlet sea anemone</name>
    <dbReference type="NCBI Taxonomy" id="45351"/>
    <lineage>
        <taxon>Eukaryota</taxon>
        <taxon>Metazoa</taxon>
        <taxon>Cnidaria</taxon>
        <taxon>Anthozoa</taxon>
        <taxon>Hexacorallia</taxon>
        <taxon>Actiniaria</taxon>
        <taxon>Edwardsiidae</taxon>
        <taxon>Nematostella</taxon>
    </lineage>
</organism>
<name>UXT_NEMVE</name>
<proteinExistence type="inferred from homology"/>
<reference key="1">
    <citation type="journal article" date="2007" name="Science">
        <title>Sea anemone genome reveals ancestral eumetazoan gene repertoire and genomic organization.</title>
        <authorList>
            <person name="Putnam N.H."/>
            <person name="Srivastava M."/>
            <person name="Hellsten U."/>
            <person name="Dirks B."/>
            <person name="Chapman J."/>
            <person name="Salamov A."/>
            <person name="Terry A."/>
            <person name="Shapiro H."/>
            <person name="Lindquist E."/>
            <person name="Kapitonov V.V."/>
            <person name="Jurka J."/>
            <person name="Genikhovich G."/>
            <person name="Grigoriev I.V."/>
            <person name="Lucas S.M."/>
            <person name="Steele R.E."/>
            <person name="Finnerty J.R."/>
            <person name="Technau U."/>
            <person name="Martindale M.Q."/>
            <person name="Rokhsar D.S."/>
        </authorList>
    </citation>
    <scope>NUCLEOTIDE SEQUENCE [LARGE SCALE GENOMIC DNA]</scope>
    <source>
        <strain>CH2 X CH6</strain>
    </source>
</reference>
<protein>
    <recommendedName>
        <fullName>Protein UXT homolog</fullName>
    </recommendedName>
</protein>
<sequence length="159" mass="18257">MADETDRHFDVQEKIRKYEEFLDQRLAKDLEAVFKSQDEIVAKITEYTQLKSSIEQIQKTDLKGKDLRSRVDLGCNFFCQASVPDPSRIFIAVGYGFFVEFTLSEALNFIEKKLAHLQHSVDKLGKDAAKIKAHMKLVLGGLQELQGLNQLSHRMHYPV</sequence>
<accession>A7T0W1</accession>
<keyword id="KW-1185">Reference proteome</keyword>
<dbReference type="EMBL" id="DS470055">
    <property type="protein sequence ID" value="EDO30400.1"/>
    <property type="molecule type" value="Genomic_DNA"/>
</dbReference>
<dbReference type="RefSeq" id="XP_001622500.1">
    <property type="nucleotide sequence ID" value="XM_001622450.1"/>
</dbReference>
<dbReference type="SMR" id="A7T0W1"/>
<dbReference type="STRING" id="45351.A7T0W1"/>
<dbReference type="EnsemblMetazoa" id="EDO30400">
    <property type="protein sequence ID" value="EDO30400"/>
    <property type="gene ID" value="NEMVEDRAFT_v1g140887"/>
</dbReference>
<dbReference type="KEGG" id="nve:5501181"/>
<dbReference type="eggNOG" id="KOG3047">
    <property type="taxonomic scope" value="Eukaryota"/>
</dbReference>
<dbReference type="HOGENOM" id="CLU_121199_1_0_1"/>
<dbReference type="InParanoid" id="A7T0W1"/>
<dbReference type="OMA" id="HMPDGYK"/>
<dbReference type="OrthoDB" id="433124at2759"/>
<dbReference type="PhylomeDB" id="A7T0W1"/>
<dbReference type="Proteomes" id="UP000001593">
    <property type="component" value="Unassembled WGS sequence"/>
</dbReference>
<dbReference type="GO" id="GO:0000785">
    <property type="term" value="C:chromatin"/>
    <property type="evidence" value="ECO:0000318"/>
    <property type="project" value="GO_Central"/>
</dbReference>
<dbReference type="GO" id="GO:0016592">
    <property type="term" value="C:mediator complex"/>
    <property type="evidence" value="ECO:0000318"/>
    <property type="project" value="GO_Central"/>
</dbReference>
<dbReference type="GO" id="GO:0003714">
    <property type="term" value="F:transcription corepressor activity"/>
    <property type="evidence" value="ECO:0000318"/>
    <property type="project" value="GO_Central"/>
</dbReference>
<dbReference type="GO" id="GO:0000122">
    <property type="term" value="P:negative regulation of transcription by RNA polymerase II"/>
    <property type="evidence" value="ECO:0007669"/>
    <property type="project" value="InterPro"/>
</dbReference>
<dbReference type="CDD" id="cd23158">
    <property type="entry name" value="Prefoldin_UXT"/>
    <property type="match status" value="1"/>
</dbReference>
<dbReference type="FunFam" id="1.10.287.370:FF:000007">
    <property type="entry name" value="UXT isoform 1"/>
    <property type="match status" value="1"/>
</dbReference>
<dbReference type="Gene3D" id="1.10.287.370">
    <property type="match status" value="1"/>
</dbReference>
<dbReference type="InterPro" id="IPR009053">
    <property type="entry name" value="Prefoldin"/>
</dbReference>
<dbReference type="InterPro" id="IPR004127">
    <property type="entry name" value="Prefoldin_subunit_alpha"/>
</dbReference>
<dbReference type="InterPro" id="IPR003994">
    <property type="entry name" value="UXT"/>
</dbReference>
<dbReference type="NCBIfam" id="TIGR00293">
    <property type="entry name" value="prefoldin subunit alpha"/>
    <property type="match status" value="1"/>
</dbReference>
<dbReference type="PANTHER" id="PTHR13345">
    <property type="entry name" value="MEDIATOR OF RNA POLYMERASE II TRANSCRIPTION SUBUNIT 10"/>
    <property type="match status" value="1"/>
</dbReference>
<dbReference type="PANTHER" id="PTHR13345:SF9">
    <property type="entry name" value="PROTEIN UXT"/>
    <property type="match status" value="1"/>
</dbReference>
<dbReference type="Pfam" id="PF02996">
    <property type="entry name" value="Prefoldin"/>
    <property type="match status" value="1"/>
</dbReference>
<dbReference type="PRINTS" id="PR01502">
    <property type="entry name" value="UXTPROTEIN"/>
</dbReference>
<dbReference type="SUPFAM" id="SSF46579">
    <property type="entry name" value="Prefoldin"/>
    <property type="match status" value="1"/>
</dbReference>
<evidence type="ECO:0000305" key="1"/>